<accession>Q80LT4</accession>
<name>LEF11_NPVAH</name>
<feature type="chain" id="PRO_0000132835" description="Late expression factor 11">
    <location>
        <begin position="1"/>
        <end position="118"/>
    </location>
</feature>
<sequence length="118" mass="13883">MSKKENIIGNKNRTQKYNNACLTRSDVYALVKETINKRKHDGEFCNITAHIFDEGFEQQKEYIREKLSTASIVTDCRQNRKRLALHRKKIESIFNIHTSLQEEFNSCSRRYNGSPNLE</sequence>
<reference key="1">
    <citation type="journal article" date="2003" name="Virology">
        <title>Genome sequence and organization of a nucleopolyhedrovirus isolated from the smaller tea tortrix, Adoxophyes honmai.</title>
        <authorList>
            <person name="Nakai M."/>
            <person name="Goto C."/>
            <person name="Kang W."/>
            <person name="Shikata M."/>
            <person name="Luque T."/>
            <person name="Kunimi Y."/>
        </authorList>
    </citation>
    <scope>NUCLEOTIDE SEQUENCE [LARGE SCALE GENOMIC DNA]</scope>
    <source>
        <strain>ADN001</strain>
    </source>
</reference>
<gene>
    <name type="primary">LEF-11</name>
</gene>
<organism>
    <name type="scientific">Adoxophyes honmai nucleopolyhedrovirus</name>
    <dbReference type="NCBI Taxonomy" id="224399"/>
    <lineage>
        <taxon>Viruses</taxon>
        <taxon>Viruses incertae sedis</taxon>
        <taxon>Naldaviricetes</taxon>
        <taxon>Lefavirales</taxon>
        <taxon>Baculoviridae</taxon>
        <taxon>Alphabaculovirus</taxon>
        <taxon>Alphabaculovirus adhonmai</taxon>
    </lineage>
</organism>
<proteinExistence type="inferred from homology"/>
<protein>
    <recommendedName>
        <fullName>Late expression factor 11</fullName>
    </recommendedName>
</protein>
<evidence type="ECO:0000250" key="1"/>
<evidence type="ECO:0000305" key="2"/>
<organismHost>
    <name type="scientific">Adoxophyes honmai</name>
    <name type="common">Smaller tea tortrix moth</name>
    <dbReference type="NCBI Taxonomy" id="85585"/>
</organismHost>
<dbReference type="EMBL" id="AP006270">
    <property type="protein sequence ID" value="BAC67263.1"/>
    <property type="molecule type" value="Genomic_DNA"/>
</dbReference>
<dbReference type="RefSeq" id="NP_818659.1">
    <property type="nucleotide sequence ID" value="NC_004690.1"/>
</dbReference>
<dbReference type="KEGG" id="vg:1485842"/>
<dbReference type="OrthoDB" id="15391at10239"/>
<dbReference type="Proteomes" id="UP000232720">
    <property type="component" value="Genome"/>
</dbReference>
<dbReference type="GO" id="GO:0006355">
    <property type="term" value="P:regulation of DNA-templated transcription"/>
    <property type="evidence" value="ECO:0007669"/>
    <property type="project" value="InterPro"/>
</dbReference>
<dbReference type="GO" id="GO:0019058">
    <property type="term" value="P:viral life cycle"/>
    <property type="evidence" value="ECO:0007669"/>
    <property type="project" value="InterPro"/>
</dbReference>
<dbReference type="InterPro" id="IPR009429">
    <property type="entry name" value="Baculo_LEF-11"/>
</dbReference>
<dbReference type="Pfam" id="PF06385">
    <property type="entry name" value="Baculo_LEF-11"/>
    <property type="match status" value="1"/>
</dbReference>
<comment type="function">
    <text evidence="1">Involved in late/very late gene activation.</text>
</comment>
<comment type="similarity">
    <text evidence="2">Belongs to the baculoviridae LEF-11 family.</text>
</comment>
<keyword id="KW-1185">Reference proteome</keyword>
<keyword id="KW-0804">Transcription</keyword>
<keyword id="KW-0805">Transcription regulation</keyword>